<protein>
    <recommendedName>
        <fullName evidence="1">Periplasmic nitrate reductase</fullName>
        <ecNumber evidence="1">1.9.6.1</ecNumber>
    </recommendedName>
</protein>
<gene>
    <name evidence="1" type="primary">napA</name>
    <name type="ordered locus">PC1_2411</name>
</gene>
<evidence type="ECO:0000255" key="1">
    <source>
        <dbReference type="HAMAP-Rule" id="MF_01630"/>
    </source>
</evidence>
<organism>
    <name type="scientific">Pectobacterium carotovorum subsp. carotovorum (strain PC1)</name>
    <dbReference type="NCBI Taxonomy" id="561230"/>
    <lineage>
        <taxon>Bacteria</taxon>
        <taxon>Pseudomonadati</taxon>
        <taxon>Pseudomonadota</taxon>
        <taxon>Gammaproteobacteria</taxon>
        <taxon>Enterobacterales</taxon>
        <taxon>Pectobacteriaceae</taxon>
        <taxon>Pectobacterium</taxon>
    </lineage>
</organism>
<keyword id="KW-0004">4Fe-4S</keyword>
<keyword id="KW-0249">Electron transport</keyword>
<keyword id="KW-0408">Iron</keyword>
<keyword id="KW-0411">Iron-sulfur</keyword>
<keyword id="KW-0479">Metal-binding</keyword>
<keyword id="KW-0500">Molybdenum</keyword>
<keyword id="KW-0534">Nitrate assimilation</keyword>
<keyword id="KW-0560">Oxidoreductase</keyword>
<keyword id="KW-0574">Periplasm</keyword>
<keyword id="KW-0732">Signal</keyword>
<keyword id="KW-0813">Transport</keyword>
<comment type="function">
    <text evidence="1">Catalytic subunit of the periplasmic nitrate reductase complex NapAB. Receives electrons from NapB and catalyzes the reduction of nitrate to nitrite.</text>
</comment>
<comment type="catalytic activity">
    <reaction evidence="1">
        <text>2 Fe(II)-[cytochrome] + nitrate + 2 H(+) = 2 Fe(III)-[cytochrome] + nitrite + H2O</text>
        <dbReference type="Rhea" id="RHEA:12909"/>
        <dbReference type="Rhea" id="RHEA-COMP:11777"/>
        <dbReference type="Rhea" id="RHEA-COMP:11778"/>
        <dbReference type="ChEBI" id="CHEBI:15377"/>
        <dbReference type="ChEBI" id="CHEBI:15378"/>
        <dbReference type="ChEBI" id="CHEBI:16301"/>
        <dbReference type="ChEBI" id="CHEBI:17632"/>
        <dbReference type="ChEBI" id="CHEBI:29033"/>
        <dbReference type="ChEBI" id="CHEBI:29034"/>
        <dbReference type="EC" id="1.9.6.1"/>
    </reaction>
</comment>
<comment type="cofactor">
    <cofactor evidence="1">
        <name>[4Fe-4S] cluster</name>
        <dbReference type="ChEBI" id="CHEBI:49883"/>
    </cofactor>
    <text evidence="1">Binds 1 [4Fe-4S] cluster.</text>
</comment>
<comment type="cofactor">
    <cofactor evidence="1">
        <name>Mo-bis(molybdopterin guanine dinucleotide)</name>
        <dbReference type="ChEBI" id="CHEBI:60539"/>
    </cofactor>
    <text evidence="1">Binds 1 molybdenum-bis(molybdopterin guanine dinucleotide) (Mo-bis-MGD) cofactor per subunit.</text>
</comment>
<comment type="subunit">
    <text evidence="1">Component of the periplasmic nitrate reductase NapAB complex composed of NapA and NapB.</text>
</comment>
<comment type="subcellular location">
    <subcellularLocation>
        <location evidence="1">Periplasm</location>
    </subcellularLocation>
</comment>
<comment type="PTM">
    <text evidence="1">Predicted to be exported by the Tat system. The position of the signal peptide cleavage has not been experimentally proven.</text>
</comment>
<comment type="similarity">
    <text evidence="1">Belongs to the prokaryotic molybdopterin-containing oxidoreductase family. NasA/NapA/NarB subfamily.</text>
</comment>
<dbReference type="EC" id="1.9.6.1" evidence="1"/>
<dbReference type="EMBL" id="CP001657">
    <property type="protein sequence ID" value="ACT13442.1"/>
    <property type="molecule type" value="Genomic_DNA"/>
</dbReference>
<dbReference type="RefSeq" id="WP_015840624.1">
    <property type="nucleotide sequence ID" value="NC_012917.1"/>
</dbReference>
<dbReference type="SMR" id="C6DK59"/>
<dbReference type="STRING" id="561230.PC1_2411"/>
<dbReference type="KEGG" id="pct:PC1_2411"/>
<dbReference type="eggNOG" id="COG0243">
    <property type="taxonomic scope" value="Bacteria"/>
</dbReference>
<dbReference type="HOGENOM" id="CLU_000422_13_4_6"/>
<dbReference type="OrthoDB" id="9816402at2"/>
<dbReference type="Proteomes" id="UP000002736">
    <property type="component" value="Chromosome"/>
</dbReference>
<dbReference type="GO" id="GO:0016020">
    <property type="term" value="C:membrane"/>
    <property type="evidence" value="ECO:0007669"/>
    <property type="project" value="TreeGrafter"/>
</dbReference>
<dbReference type="GO" id="GO:0009325">
    <property type="term" value="C:nitrate reductase complex"/>
    <property type="evidence" value="ECO:0007669"/>
    <property type="project" value="TreeGrafter"/>
</dbReference>
<dbReference type="GO" id="GO:0042597">
    <property type="term" value="C:periplasmic space"/>
    <property type="evidence" value="ECO:0007669"/>
    <property type="project" value="UniProtKB-SubCell"/>
</dbReference>
<dbReference type="GO" id="GO:0051539">
    <property type="term" value="F:4 iron, 4 sulfur cluster binding"/>
    <property type="evidence" value="ECO:0007669"/>
    <property type="project" value="UniProtKB-KW"/>
</dbReference>
<dbReference type="GO" id="GO:0009055">
    <property type="term" value="F:electron transfer activity"/>
    <property type="evidence" value="ECO:0007669"/>
    <property type="project" value="UniProtKB-UniRule"/>
</dbReference>
<dbReference type="GO" id="GO:0005506">
    <property type="term" value="F:iron ion binding"/>
    <property type="evidence" value="ECO:0007669"/>
    <property type="project" value="UniProtKB-UniRule"/>
</dbReference>
<dbReference type="GO" id="GO:0030151">
    <property type="term" value="F:molybdenum ion binding"/>
    <property type="evidence" value="ECO:0007669"/>
    <property type="project" value="InterPro"/>
</dbReference>
<dbReference type="GO" id="GO:0043546">
    <property type="term" value="F:molybdopterin cofactor binding"/>
    <property type="evidence" value="ECO:0007669"/>
    <property type="project" value="InterPro"/>
</dbReference>
<dbReference type="GO" id="GO:0050140">
    <property type="term" value="F:nitrate reductase (cytochrome) activity"/>
    <property type="evidence" value="ECO:0007669"/>
    <property type="project" value="UniProtKB-EC"/>
</dbReference>
<dbReference type="GO" id="GO:0045333">
    <property type="term" value="P:cellular respiration"/>
    <property type="evidence" value="ECO:0007669"/>
    <property type="project" value="UniProtKB-ARBA"/>
</dbReference>
<dbReference type="GO" id="GO:0006777">
    <property type="term" value="P:Mo-molybdopterin cofactor biosynthetic process"/>
    <property type="evidence" value="ECO:0007669"/>
    <property type="project" value="UniProtKB-UniRule"/>
</dbReference>
<dbReference type="GO" id="GO:0042128">
    <property type="term" value="P:nitrate assimilation"/>
    <property type="evidence" value="ECO:0007669"/>
    <property type="project" value="UniProtKB-UniRule"/>
</dbReference>
<dbReference type="CDD" id="cd02791">
    <property type="entry name" value="MopB_CT_Nitrate-R-NapA-like"/>
    <property type="match status" value="1"/>
</dbReference>
<dbReference type="CDD" id="cd02754">
    <property type="entry name" value="MopB_Nitrate-R-NapA-like"/>
    <property type="match status" value="1"/>
</dbReference>
<dbReference type="FunFam" id="2.40.40.20:FF:000005">
    <property type="entry name" value="Periplasmic nitrate reductase"/>
    <property type="match status" value="1"/>
</dbReference>
<dbReference type="Gene3D" id="2.40.40.20">
    <property type="match status" value="1"/>
</dbReference>
<dbReference type="Gene3D" id="3.30.200.210">
    <property type="match status" value="1"/>
</dbReference>
<dbReference type="Gene3D" id="3.40.50.740">
    <property type="match status" value="1"/>
</dbReference>
<dbReference type="Gene3D" id="3.40.228.10">
    <property type="entry name" value="Dimethylsulfoxide Reductase, domain 2"/>
    <property type="match status" value="1"/>
</dbReference>
<dbReference type="HAMAP" id="MF_01630">
    <property type="entry name" value="Nitrate_reduct_NapA"/>
    <property type="match status" value="1"/>
</dbReference>
<dbReference type="InterPro" id="IPR009010">
    <property type="entry name" value="Asp_de-COase-like_dom_sf"/>
</dbReference>
<dbReference type="InterPro" id="IPR041957">
    <property type="entry name" value="CT_Nitrate-R-NapA-like"/>
</dbReference>
<dbReference type="InterPro" id="IPR006657">
    <property type="entry name" value="MoPterin_dinucl-bd_dom"/>
</dbReference>
<dbReference type="InterPro" id="IPR006656">
    <property type="entry name" value="Mopterin_OxRdtase"/>
</dbReference>
<dbReference type="InterPro" id="IPR006963">
    <property type="entry name" value="Mopterin_OxRdtase_4Fe-4S_dom"/>
</dbReference>
<dbReference type="InterPro" id="IPR027467">
    <property type="entry name" value="MopterinOxRdtase_cofactor_BS"/>
</dbReference>
<dbReference type="InterPro" id="IPR010051">
    <property type="entry name" value="Periplasm_NO3_reductase_lsu"/>
</dbReference>
<dbReference type="InterPro" id="IPR050123">
    <property type="entry name" value="Prok_molybdopt-oxidoreductase"/>
</dbReference>
<dbReference type="InterPro" id="IPR006311">
    <property type="entry name" value="TAT_signal"/>
</dbReference>
<dbReference type="InterPro" id="IPR019546">
    <property type="entry name" value="TAT_signal_bac_arc"/>
</dbReference>
<dbReference type="NCBIfam" id="TIGR01706">
    <property type="entry name" value="NAPA"/>
    <property type="match status" value="1"/>
</dbReference>
<dbReference type="NCBIfam" id="NF010055">
    <property type="entry name" value="PRK13532.1"/>
    <property type="match status" value="1"/>
</dbReference>
<dbReference type="NCBIfam" id="TIGR01409">
    <property type="entry name" value="TAT_signal_seq"/>
    <property type="match status" value="1"/>
</dbReference>
<dbReference type="PANTHER" id="PTHR43105:SF11">
    <property type="entry name" value="PERIPLASMIC NITRATE REDUCTASE"/>
    <property type="match status" value="1"/>
</dbReference>
<dbReference type="PANTHER" id="PTHR43105">
    <property type="entry name" value="RESPIRATORY NITRATE REDUCTASE"/>
    <property type="match status" value="1"/>
</dbReference>
<dbReference type="Pfam" id="PF04879">
    <property type="entry name" value="Molybdop_Fe4S4"/>
    <property type="match status" value="1"/>
</dbReference>
<dbReference type="Pfam" id="PF00384">
    <property type="entry name" value="Molybdopterin"/>
    <property type="match status" value="1"/>
</dbReference>
<dbReference type="Pfam" id="PF01568">
    <property type="entry name" value="Molydop_binding"/>
    <property type="match status" value="1"/>
</dbReference>
<dbReference type="SMART" id="SM00926">
    <property type="entry name" value="Molybdop_Fe4S4"/>
    <property type="match status" value="1"/>
</dbReference>
<dbReference type="SUPFAM" id="SSF50692">
    <property type="entry name" value="ADC-like"/>
    <property type="match status" value="1"/>
</dbReference>
<dbReference type="SUPFAM" id="SSF53706">
    <property type="entry name" value="Formate dehydrogenase/DMSO reductase, domains 1-3"/>
    <property type="match status" value="1"/>
</dbReference>
<dbReference type="PROSITE" id="PS51669">
    <property type="entry name" value="4FE4S_MOW_BIS_MGD"/>
    <property type="match status" value="1"/>
</dbReference>
<dbReference type="PROSITE" id="PS00551">
    <property type="entry name" value="MOLYBDOPTERIN_PROK_1"/>
    <property type="match status" value="1"/>
</dbReference>
<dbReference type="PROSITE" id="PS51318">
    <property type="entry name" value="TAT"/>
    <property type="match status" value="1"/>
</dbReference>
<proteinExistence type="inferred from homology"/>
<name>NAPA_PECCP</name>
<reference key="1">
    <citation type="submission" date="2009-07" db="EMBL/GenBank/DDBJ databases">
        <title>Complete sequence of Pectobacterium carotovorum subsp. carotovorum PC1.</title>
        <authorList>
            <consortium name="US DOE Joint Genome Institute"/>
            <person name="Lucas S."/>
            <person name="Copeland A."/>
            <person name="Lapidus A."/>
            <person name="Glavina del Rio T."/>
            <person name="Tice H."/>
            <person name="Bruce D."/>
            <person name="Goodwin L."/>
            <person name="Pitluck S."/>
            <person name="Munk A.C."/>
            <person name="Brettin T."/>
            <person name="Detter J.C."/>
            <person name="Han C."/>
            <person name="Tapia R."/>
            <person name="Larimer F."/>
            <person name="Land M."/>
            <person name="Hauser L."/>
            <person name="Kyrpides N."/>
            <person name="Mikhailova N."/>
            <person name="Balakrishnan V."/>
            <person name="Glasner J."/>
            <person name="Perna N.T."/>
        </authorList>
    </citation>
    <scope>NUCLEOTIDE SEQUENCE [LARGE SCALE GENOMIC DNA]</scope>
    <source>
        <strain>PC1</strain>
    </source>
</reference>
<sequence length="828" mass="92674">MKLSRRHFMKANAVAAAAAVAGITIPIAVRAATEQSEAIHWDKAPCRFCGVGCGVLVGTQNGRIVASQGDPDAPVNRGLNCIKGYFLPKIMYGQDRLTQPLLRMRDGKFDKEGEFTPISWDKAFDIMAEKFKTALKEKGPNAIGMFGSGQSTIWEGYAAAKLFKAGFRSNNIDPNARHCMASAVVGFMRTFGMDEPMGCYDDIEQTDAFVLWGSNMAEMHPILWSRITDRRLSNSNVTVAVLSTYQHRSFELADNGMVFTPQTDLAILNYIANYIIQNNAVNEAFFTRHVNLRRGVTDIGYGLRPTHPLEKAAKNPGSDASEPMSFEEYKAFVADYTLEKTVAISGVPADQLEALAKLYADPKKKVISYWTMGFNQHTRGVWANNLVYNIHLLTGKISQPGCGPFSLTGQPSACGTAREVGTFAHRLPADMVVTNEKHRAIAEKLWQLPTGTIPEKIGLHAVAQDRALKDGTLNAYWVMCNNNMQAGPNINQERMPGWRDPRNFIVVSDPYPTVSALAADLILPTAMWVEKEGAYGNAERRTQFWRQQVKAPGESKSDLWQVVSFAKRFAVEEVWPEELLAQKPAYRGKTLYDVLFANDVTTRFPLSELAENQLNDESRDFGFYLQKGLFEEYAAFGRGHGHDLAPFDDYHKARGLRWPVVNGKETQWRYSEGHDPYVKAGEAYRFYGKPDGKAVIFALPYEPAAEAPDDEYDLWLSTGRVLEHWHTGSMTRRVPELHRAFPEAVLFIHPQDAKARDLRRGEKVRIISRRGEVVSVVETRGRNKPPRGLVYMPFFDAAQMTNVLTLDATDPLSKETDFKKCAVKLAKV</sequence>
<feature type="signal peptide" description="Tat-type signal" evidence="1">
    <location>
        <begin position="1"/>
        <end position="31"/>
    </location>
</feature>
<feature type="chain" id="PRO_5000486441" description="Periplasmic nitrate reductase" evidence="1">
    <location>
        <begin position="32"/>
        <end position="828"/>
    </location>
</feature>
<feature type="domain" description="4Fe-4S Mo/W bis-MGD-type" evidence="1">
    <location>
        <begin position="39"/>
        <end position="95"/>
    </location>
</feature>
<feature type="binding site" evidence="1">
    <location>
        <position position="46"/>
    </location>
    <ligand>
        <name>[4Fe-4S] cluster</name>
        <dbReference type="ChEBI" id="CHEBI:49883"/>
    </ligand>
</feature>
<feature type="binding site" evidence="1">
    <location>
        <position position="49"/>
    </location>
    <ligand>
        <name>[4Fe-4S] cluster</name>
        <dbReference type="ChEBI" id="CHEBI:49883"/>
    </ligand>
</feature>
<feature type="binding site" evidence="1">
    <location>
        <position position="53"/>
    </location>
    <ligand>
        <name>[4Fe-4S] cluster</name>
        <dbReference type="ChEBI" id="CHEBI:49883"/>
    </ligand>
</feature>
<feature type="binding site" evidence="1">
    <location>
        <position position="81"/>
    </location>
    <ligand>
        <name>[4Fe-4S] cluster</name>
        <dbReference type="ChEBI" id="CHEBI:49883"/>
    </ligand>
</feature>
<feature type="binding site" evidence="1">
    <location>
        <position position="83"/>
    </location>
    <ligand>
        <name>Mo-bis(molybdopterin guanine dinucleotide)</name>
        <dbReference type="ChEBI" id="CHEBI:60539"/>
    </ligand>
</feature>
<feature type="binding site" evidence="1">
    <location>
        <position position="150"/>
    </location>
    <ligand>
        <name>Mo-bis(molybdopterin guanine dinucleotide)</name>
        <dbReference type="ChEBI" id="CHEBI:60539"/>
    </ligand>
</feature>
<feature type="binding site" evidence="1">
    <location>
        <position position="175"/>
    </location>
    <ligand>
        <name>Mo-bis(molybdopterin guanine dinucleotide)</name>
        <dbReference type="ChEBI" id="CHEBI:60539"/>
    </ligand>
</feature>
<feature type="binding site" evidence="1">
    <location>
        <position position="179"/>
    </location>
    <ligand>
        <name>Mo-bis(molybdopterin guanine dinucleotide)</name>
        <dbReference type="ChEBI" id="CHEBI:60539"/>
    </ligand>
</feature>
<feature type="binding site" evidence="1">
    <location>
        <begin position="212"/>
        <end position="219"/>
    </location>
    <ligand>
        <name>Mo-bis(molybdopterin guanine dinucleotide)</name>
        <dbReference type="ChEBI" id="CHEBI:60539"/>
    </ligand>
</feature>
<feature type="binding site" evidence="1">
    <location>
        <begin position="243"/>
        <end position="247"/>
    </location>
    <ligand>
        <name>Mo-bis(molybdopterin guanine dinucleotide)</name>
        <dbReference type="ChEBI" id="CHEBI:60539"/>
    </ligand>
</feature>
<feature type="binding site" evidence="1">
    <location>
        <begin position="262"/>
        <end position="264"/>
    </location>
    <ligand>
        <name>Mo-bis(molybdopterin guanine dinucleotide)</name>
        <dbReference type="ChEBI" id="CHEBI:60539"/>
    </ligand>
</feature>
<feature type="binding site" evidence="1">
    <location>
        <position position="372"/>
    </location>
    <ligand>
        <name>Mo-bis(molybdopterin guanine dinucleotide)</name>
        <dbReference type="ChEBI" id="CHEBI:60539"/>
    </ligand>
</feature>
<feature type="binding site" evidence="1">
    <location>
        <position position="376"/>
    </location>
    <ligand>
        <name>Mo-bis(molybdopterin guanine dinucleotide)</name>
        <dbReference type="ChEBI" id="CHEBI:60539"/>
    </ligand>
</feature>
<feature type="binding site" evidence="1">
    <location>
        <position position="482"/>
    </location>
    <ligand>
        <name>Mo-bis(molybdopterin guanine dinucleotide)</name>
        <dbReference type="ChEBI" id="CHEBI:60539"/>
    </ligand>
</feature>
<feature type="binding site" evidence="1">
    <location>
        <begin position="508"/>
        <end position="509"/>
    </location>
    <ligand>
        <name>Mo-bis(molybdopterin guanine dinucleotide)</name>
        <dbReference type="ChEBI" id="CHEBI:60539"/>
    </ligand>
</feature>
<feature type="binding site" evidence="1">
    <location>
        <position position="531"/>
    </location>
    <ligand>
        <name>Mo-bis(molybdopterin guanine dinucleotide)</name>
        <dbReference type="ChEBI" id="CHEBI:60539"/>
    </ligand>
</feature>
<feature type="binding site" evidence="1">
    <location>
        <position position="558"/>
    </location>
    <ligand>
        <name>Mo-bis(molybdopterin guanine dinucleotide)</name>
        <dbReference type="ChEBI" id="CHEBI:60539"/>
    </ligand>
</feature>
<feature type="binding site" evidence="1">
    <location>
        <begin position="718"/>
        <end position="727"/>
    </location>
    <ligand>
        <name>Mo-bis(molybdopterin guanine dinucleotide)</name>
        <dbReference type="ChEBI" id="CHEBI:60539"/>
    </ligand>
</feature>
<feature type="binding site" evidence="1">
    <location>
        <position position="794"/>
    </location>
    <ligand>
        <name>substrate</name>
    </ligand>
</feature>
<feature type="binding site" evidence="1">
    <location>
        <position position="802"/>
    </location>
    <ligand>
        <name>Mo-bis(molybdopterin guanine dinucleotide)</name>
        <dbReference type="ChEBI" id="CHEBI:60539"/>
    </ligand>
</feature>
<feature type="binding site" evidence="1">
    <location>
        <position position="819"/>
    </location>
    <ligand>
        <name>Mo-bis(molybdopterin guanine dinucleotide)</name>
        <dbReference type="ChEBI" id="CHEBI:60539"/>
    </ligand>
</feature>
<accession>C6DK59</accession>